<evidence type="ECO:0000255" key="1">
    <source>
        <dbReference type="HAMAP-Rule" id="MF_00028"/>
    </source>
</evidence>
<dbReference type="EMBL" id="CU234118">
    <property type="protein sequence ID" value="CAL78625.1"/>
    <property type="molecule type" value="Genomic_DNA"/>
</dbReference>
<dbReference type="RefSeq" id="WP_011927724.1">
    <property type="nucleotide sequence ID" value="NC_009445.1"/>
</dbReference>
<dbReference type="STRING" id="114615.BRADO4913"/>
<dbReference type="KEGG" id="bra:BRADO4913"/>
<dbReference type="eggNOG" id="COG1492">
    <property type="taxonomic scope" value="Bacteria"/>
</dbReference>
<dbReference type="HOGENOM" id="CLU_019250_2_2_5"/>
<dbReference type="UniPathway" id="UPA00148"/>
<dbReference type="Proteomes" id="UP000001994">
    <property type="component" value="Chromosome"/>
</dbReference>
<dbReference type="GO" id="GO:0015420">
    <property type="term" value="F:ABC-type vitamin B12 transporter activity"/>
    <property type="evidence" value="ECO:0007669"/>
    <property type="project" value="UniProtKB-UniRule"/>
</dbReference>
<dbReference type="GO" id="GO:0003824">
    <property type="term" value="F:catalytic activity"/>
    <property type="evidence" value="ECO:0007669"/>
    <property type="project" value="InterPro"/>
</dbReference>
<dbReference type="GO" id="GO:0009236">
    <property type="term" value="P:cobalamin biosynthetic process"/>
    <property type="evidence" value="ECO:0007669"/>
    <property type="project" value="UniProtKB-UniRule"/>
</dbReference>
<dbReference type="CDD" id="cd01750">
    <property type="entry name" value="GATase1_CobQ"/>
    <property type="match status" value="1"/>
</dbReference>
<dbReference type="Gene3D" id="3.40.50.880">
    <property type="match status" value="1"/>
</dbReference>
<dbReference type="Gene3D" id="3.40.50.300">
    <property type="entry name" value="P-loop containing nucleotide triphosphate hydrolases"/>
    <property type="match status" value="1"/>
</dbReference>
<dbReference type="HAMAP" id="MF_00028">
    <property type="entry name" value="CobQ"/>
    <property type="match status" value="1"/>
</dbReference>
<dbReference type="InterPro" id="IPR029062">
    <property type="entry name" value="Class_I_gatase-like"/>
</dbReference>
<dbReference type="InterPro" id="IPR002586">
    <property type="entry name" value="CobQ/CobB/MinD/ParA_Nub-bd_dom"/>
</dbReference>
<dbReference type="InterPro" id="IPR033949">
    <property type="entry name" value="CobQ_GATase1"/>
</dbReference>
<dbReference type="InterPro" id="IPR004459">
    <property type="entry name" value="CobQ_synth"/>
</dbReference>
<dbReference type="InterPro" id="IPR011698">
    <property type="entry name" value="GATase_3"/>
</dbReference>
<dbReference type="InterPro" id="IPR027417">
    <property type="entry name" value="P-loop_NTPase"/>
</dbReference>
<dbReference type="NCBIfam" id="TIGR00313">
    <property type="entry name" value="cobQ"/>
    <property type="match status" value="1"/>
</dbReference>
<dbReference type="NCBIfam" id="NF001989">
    <property type="entry name" value="PRK00784.1"/>
    <property type="match status" value="1"/>
</dbReference>
<dbReference type="PANTHER" id="PTHR21343:SF1">
    <property type="entry name" value="COBYRIC ACID SYNTHASE"/>
    <property type="match status" value="1"/>
</dbReference>
<dbReference type="PANTHER" id="PTHR21343">
    <property type="entry name" value="DETHIOBIOTIN SYNTHETASE"/>
    <property type="match status" value="1"/>
</dbReference>
<dbReference type="Pfam" id="PF01656">
    <property type="entry name" value="CbiA"/>
    <property type="match status" value="1"/>
</dbReference>
<dbReference type="Pfam" id="PF07685">
    <property type="entry name" value="GATase_3"/>
    <property type="match status" value="1"/>
</dbReference>
<dbReference type="SUPFAM" id="SSF52317">
    <property type="entry name" value="Class I glutamine amidotransferase-like"/>
    <property type="match status" value="1"/>
</dbReference>
<dbReference type="SUPFAM" id="SSF52540">
    <property type="entry name" value="P-loop containing nucleoside triphosphate hydrolases"/>
    <property type="match status" value="1"/>
</dbReference>
<dbReference type="PROSITE" id="PS51274">
    <property type="entry name" value="GATASE_COBBQ"/>
    <property type="match status" value="1"/>
</dbReference>
<protein>
    <recommendedName>
        <fullName evidence="1">Cobyric acid synthase</fullName>
    </recommendedName>
</protein>
<comment type="function">
    <text evidence="1">Catalyzes amidations at positions B, D, E, and G on adenosylcobyrinic A,C-diamide. NH(2) groups are provided by glutamine, and one molecule of ATP is hydrogenolyzed for each amidation.</text>
</comment>
<comment type="pathway">
    <text evidence="1">Cofactor biosynthesis; adenosylcobalamin biosynthesis.</text>
</comment>
<comment type="similarity">
    <text evidence="1">Belongs to the CobB/CobQ family. CobQ subfamily.</text>
</comment>
<gene>
    <name evidence="1" type="primary">cobQ</name>
    <name type="ordered locus">BRADO4913</name>
</gene>
<proteinExistence type="inferred from homology"/>
<accession>A4YXJ9</accession>
<organism>
    <name type="scientific">Bradyrhizobium sp. (strain ORS 278)</name>
    <dbReference type="NCBI Taxonomy" id="114615"/>
    <lineage>
        <taxon>Bacteria</taxon>
        <taxon>Pseudomonadati</taxon>
        <taxon>Pseudomonadota</taxon>
        <taxon>Alphaproteobacteria</taxon>
        <taxon>Hyphomicrobiales</taxon>
        <taxon>Nitrobacteraceae</taxon>
        <taxon>Bradyrhizobium</taxon>
    </lineage>
</organism>
<keyword id="KW-0169">Cobalamin biosynthesis</keyword>
<keyword id="KW-0315">Glutamine amidotransferase</keyword>
<keyword id="KW-1185">Reference proteome</keyword>
<reference key="1">
    <citation type="journal article" date="2007" name="Science">
        <title>Legumes symbioses: absence of nod genes in photosynthetic bradyrhizobia.</title>
        <authorList>
            <person name="Giraud E."/>
            <person name="Moulin L."/>
            <person name="Vallenet D."/>
            <person name="Barbe V."/>
            <person name="Cytryn E."/>
            <person name="Avarre J.-C."/>
            <person name="Jaubert M."/>
            <person name="Simon D."/>
            <person name="Cartieaux F."/>
            <person name="Prin Y."/>
            <person name="Bena G."/>
            <person name="Hannibal L."/>
            <person name="Fardoux J."/>
            <person name="Kojadinovic M."/>
            <person name="Vuillet L."/>
            <person name="Lajus A."/>
            <person name="Cruveiller S."/>
            <person name="Rouy Z."/>
            <person name="Mangenot S."/>
            <person name="Segurens B."/>
            <person name="Dossat C."/>
            <person name="Franck W.L."/>
            <person name="Chang W.-S."/>
            <person name="Saunders E."/>
            <person name="Bruce D."/>
            <person name="Richardson P."/>
            <person name="Normand P."/>
            <person name="Dreyfus B."/>
            <person name="Pignol D."/>
            <person name="Stacey G."/>
            <person name="Emerich D."/>
            <person name="Vermeglio A."/>
            <person name="Medigue C."/>
            <person name="Sadowsky M."/>
        </authorList>
    </citation>
    <scope>NUCLEOTIDE SEQUENCE [LARGE SCALE GENOMIC DNA]</scope>
    <source>
        <strain>ORS 278</strain>
    </source>
</reference>
<sequence>MAARAIMFQGTGSDVGKSLMVAGLARALTLRGLTVAPFKPQNMSNNAAVTADGGEIGRAQALQARAARRPMTVHMNPVLLKPQSEVGSQVVVQGRVIGNAKASAYQAMKPQLMAAVLESFHRLAADADIVLVEGAGSASEINLRAGDIANMGFAQATQTPVVIIGDIDRGGVIASLVGTKAVLAPDDAALVAGFLVNRFRGDPALFAAGMNEIAARTGWASLGLIPHFSDARRLPAEDALGLPGHGAAGGQRPKVVVLAYPRISNFDEFDPLRLEDGIDLQFLRPGTPIPGDAAVAILPGSKATIADLQALRETGWDIDLSAHLRRGGRVLGICGGYQMLGRKISDPDGHEGAPGSVAGLGLLDVETTLTDDKALREVHGALTEDQIPFRGYEMHIGRTDGPTARAPFLTFADGRSDGAVAREGQIAGCYVHGLFADDGLRAHWLGRLGAVTTGLAYESDVEATLDGLAAHLERHVNVSGILALARRPTPRPTAP</sequence>
<name>COBQ_BRASO</name>
<feature type="chain" id="PRO_0000332323" description="Cobyric acid synthase">
    <location>
        <begin position="1"/>
        <end position="495"/>
    </location>
</feature>
<feature type="domain" description="GATase cobBQ-type" evidence="1">
    <location>
        <begin position="252"/>
        <end position="440"/>
    </location>
</feature>
<feature type="active site" description="Nucleophile" evidence="1">
    <location>
        <position position="334"/>
    </location>
</feature>
<feature type="active site" evidence="1">
    <location>
        <position position="432"/>
    </location>
</feature>